<name>MTRR_CAEEL</name>
<feature type="chain" id="PRO_0000096638" description="Methionine synthase reductase">
    <location>
        <begin position="1"/>
        <end position="682"/>
    </location>
</feature>
<feature type="domain" description="Flavodoxin-like" evidence="2">
    <location>
        <begin position="4"/>
        <end position="147"/>
    </location>
</feature>
<feature type="domain" description="FAD-binding FR-type" evidence="3">
    <location>
        <begin position="271"/>
        <end position="516"/>
    </location>
</feature>
<feature type="binding site" evidence="2">
    <location>
        <begin position="93"/>
        <end position="124"/>
    </location>
    <ligand>
        <name>FMN</name>
        <dbReference type="ChEBI" id="CHEBI:58210"/>
    </ligand>
</feature>
<feature type="binding site" evidence="1">
    <location>
        <position position="293"/>
    </location>
    <ligand>
        <name>NADP(+)</name>
        <dbReference type="ChEBI" id="CHEBI:58349"/>
    </ligand>
</feature>
<feature type="binding site" evidence="1">
    <location>
        <begin position="455"/>
        <end position="458"/>
    </location>
    <ligand>
        <name>FAD</name>
        <dbReference type="ChEBI" id="CHEBI:57692"/>
    </ligand>
</feature>
<feature type="binding site" evidence="1">
    <location>
        <begin position="488"/>
        <end position="491"/>
    </location>
    <ligand>
        <name>FAD</name>
        <dbReference type="ChEBI" id="CHEBI:57692"/>
    </ligand>
</feature>
<feature type="binding site" evidence="1">
    <location>
        <begin position="607"/>
        <end position="609"/>
    </location>
    <ligand>
        <name>NADP(+)</name>
        <dbReference type="ChEBI" id="CHEBI:58349"/>
    </ligand>
</feature>
<feature type="binding site" evidence="1">
    <location>
        <position position="643"/>
    </location>
    <ligand>
        <name>NADP(+)</name>
        <dbReference type="ChEBI" id="CHEBI:58349"/>
    </ligand>
</feature>
<feature type="binding site" evidence="1">
    <location>
        <position position="681"/>
    </location>
    <ligand>
        <name>FAD</name>
        <dbReference type="ChEBI" id="CHEBI:57692"/>
    </ligand>
</feature>
<reference key="1">
    <citation type="journal article" date="1998" name="Science">
        <title>Genome sequence of the nematode C. elegans: a platform for investigating biology.</title>
        <authorList>
            <consortium name="The C. elegans sequencing consortium"/>
        </authorList>
    </citation>
    <scope>NUCLEOTIDE SEQUENCE [LARGE SCALE GENOMIC DNA]</scope>
    <source>
        <strain>Bristol N2</strain>
    </source>
</reference>
<keyword id="KW-0028">Amino-acid biosynthesis</keyword>
<keyword id="KW-0274">FAD</keyword>
<keyword id="KW-0285">Flavoprotein</keyword>
<keyword id="KW-0288">FMN</keyword>
<keyword id="KW-0486">Methionine biosynthesis</keyword>
<keyword id="KW-0521">NADP</keyword>
<keyword id="KW-0560">Oxidoreductase</keyword>
<keyword id="KW-1185">Reference proteome</keyword>
<keyword id="KW-0949">S-adenosyl-L-methionine</keyword>
<dbReference type="EC" id="1.16.1.8" evidence="1"/>
<dbReference type="EMBL" id="BX284602">
    <property type="protein sequence ID" value="CAA84637.1"/>
    <property type="molecule type" value="Genomic_DNA"/>
</dbReference>
<dbReference type="PIR" id="T18838">
    <property type="entry name" value="T18838"/>
</dbReference>
<dbReference type="RefSeq" id="NP_495978.1">
    <property type="nucleotide sequence ID" value="NM_063577.7"/>
</dbReference>
<dbReference type="SMR" id="Q17574"/>
<dbReference type="BioGRID" id="39795">
    <property type="interactions" value="4"/>
</dbReference>
<dbReference type="FunCoup" id="Q17574">
    <property type="interactions" value="1527"/>
</dbReference>
<dbReference type="STRING" id="6239.C01G6.6a.2"/>
<dbReference type="iPTMnet" id="Q17574"/>
<dbReference type="PaxDb" id="6239-C01G6.6a.2"/>
<dbReference type="PeptideAtlas" id="Q17574"/>
<dbReference type="EnsemblMetazoa" id="C01G6.6a.1">
    <property type="protein sequence ID" value="C01G6.6a.1"/>
    <property type="gene ID" value="WBGene00006510"/>
</dbReference>
<dbReference type="GeneID" id="174471"/>
<dbReference type="KEGG" id="cel:CELE_C01G6.6"/>
<dbReference type="UCSC" id="C01G6.6b.1">
    <property type="organism name" value="c. elegans"/>
</dbReference>
<dbReference type="AGR" id="WB:WBGene00006510"/>
<dbReference type="CTD" id="174471"/>
<dbReference type="WormBase" id="C01G6.6a">
    <property type="protein sequence ID" value="CE00868"/>
    <property type="gene ID" value="WBGene00006510"/>
    <property type="gene designation" value="mtrr-1"/>
</dbReference>
<dbReference type="eggNOG" id="KOG1158">
    <property type="taxonomic scope" value="Eukaryota"/>
</dbReference>
<dbReference type="GeneTree" id="ENSGT00940000155822"/>
<dbReference type="HOGENOM" id="CLU_001570_17_7_1"/>
<dbReference type="InParanoid" id="Q17574"/>
<dbReference type="OMA" id="LFFGHQR"/>
<dbReference type="OrthoDB" id="1856718at2759"/>
<dbReference type="PhylomeDB" id="Q17574"/>
<dbReference type="Reactome" id="R-CEL-156581">
    <property type="pathway name" value="Methylation"/>
</dbReference>
<dbReference type="Reactome" id="R-CEL-1614635">
    <property type="pathway name" value="Sulfur amino acid metabolism"/>
</dbReference>
<dbReference type="Reactome" id="R-CEL-9759218">
    <property type="pathway name" value="Cobalamin (Cbl) metabolism"/>
</dbReference>
<dbReference type="PRO" id="PR:Q17574"/>
<dbReference type="Proteomes" id="UP000001940">
    <property type="component" value="Chromosome II"/>
</dbReference>
<dbReference type="Bgee" id="WBGene00006510">
    <property type="expression patterns" value="Expressed in germ line (C elegans) and 4 other cell types or tissues"/>
</dbReference>
<dbReference type="GO" id="GO:0005829">
    <property type="term" value="C:cytosol"/>
    <property type="evidence" value="ECO:0000318"/>
    <property type="project" value="GO_Central"/>
</dbReference>
<dbReference type="GO" id="GO:0030586">
    <property type="term" value="F:[methionine synthase] reductase (NADPH) activity"/>
    <property type="evidence" value="ECO:0000318"/>
    <property type="project" value="GO_Central"/>
</dbReference>
<dbReference type="GO" id="GO:0050660">
    <property type="term" value="F:flavin adenine dinucleotide binding"/>
    <property type="evidence" value="ECO:0000318"/>
    <property type="project" value="GO_Central"/>
</dbReference>
<dbReference type="GO" id="GO:0010181">
    <property type="term" value="F:FMN binding"/>
    <property type="evidence" value="ECO:0000318"/>
    <property type="project" value="GO_Central"/>
</dbReference>
<dbReference type="GO" id="GO:0050667">
    <property type="term" value="P:homocysteine metabolic process"/>
    <property type="evidence" value="ECO:0000318"/>
    <property type="project" value="GO_Central"/>
</dbReference>
<dbReference type="GO" id="GO:0009086">
    <property type="term" value="P:methionine biosynthetic process"/>
    <property type="evidence" value="ECO:0000318"/>
    <property type="project" value="GO_Central"/>
</dbReference>
<dbReference type="CDD" id="cd06203">
    <property type="entry name" value="methionine_synthase_red"/>
    <property type="match status" value="1"/>
</dbReference>
<dbReference type="FunFam" id="3.40.50.360:FF:000059">
    <property type="entry name" value="5-methyltetrahydrofolate-homocysteine methyltransferase reductase"/>
    <property type="match status" value="1"/>
</dbReference>
<dbReference type="FunFam" id="1.20.990.10:FF:000007">
    <property type="entry name" value="Methionine synthase reductase"/>
    <property type="match status" value="1"/>
</dbReference>
<dbReference type="FunFam" id="3.40.50.80:FF:000090">
    <property type="entry name" value="Methionine synthase reductase"/>
    <property type="match status" value="1"/>
</dbReference>
<dbReference type="Gene3D" id="3.40.50.360">
    <property type="match status" value="1"/>
</dbReference>
<dbReference type="Gene3D" id="1.20.990.10">
    <property type="entry name" value="NADPH-cytochrome p450 Reductase, Chain A, domain 3"/>
    <property type="match status" value="1"/>
</dbReference>
<dbReference type="Gene3D" id="3.40.50.80">
    <property type="entry name" value="Nucleotide-binding domain of ferredoxin-NADP reductase (FNR) module"/>
    <property type="match status" value="1"/>
</dbReference>
<dbReference type="Gene3D" id="2.40.30.10">
    <property type="entry name" value="Translation factors"/>
    <property type="match status" value="1"/>
</dbReference>
<dbReference type="InterPro" id="IPR003097">
    <property type="entry name" value="CysJ-like_FAD-binding"/>
</dbReference>
<dbReference type="InterPro" id="IPR017927">
    <property type="entry name" value="FAD-bd_FR_type"/>
</dbReference>
<dbReference type="InterPro" id="IPR001094">
    <property type="entry name" value="Flavdoxin-like"/>
</dbReference>
<dbReference type="InterPro" id="IPR008254">
    <property type="entry name" value="Flavodoxin/NO_synth"/>
</dbReference>
<dbReference type="InterPro" id="IPR001709">
    <property type="entry name" value="Flavoprot_Pyr_Nucl_cyt_Rdtase"/>
</dbReference>
<dbReference type="InterPro" id="IPR029039">
    <property type="entry name" value="Flavoprotein-like_sf"/>
</dbReference>
<dbReference type="InterPro" id="IPR039261">
    <property type="entry name" value="FNR_nucleotide-bd"/>
</dbReference>
<dbReference type="InterPro" id="IPR023173">
    <property type="entry name" value="NADPH_Cyt_P450_Rdtase_alpha"/>
</dbReference>
<dbReference type="InterPro" id="IPR001433">
    <property type="entry name" value="OxRdtase_FAD/NAD-bd"/>
</dbReference>
<dbReference type="InterPro" id="IPR017938">
    <property type="entry name" value="Riboflavin_synthase-like_b-brl"/>
</dbReference>
<dbReference type="PANTHER" id="PTHR19384:SF84">
    <property type="entry name" value="METHIONINE SYNTHASE REDUCTASE"/>
    <property type="match status" value="1"/>
</dbReference>
<dbReference type="PANTHER" id="PTHR19384">
    <property type="entry name" value="NITRIC OXIDE SYNTHASE-RELATED"/>
    <property type="match status" value="1"/>
</dbReference>
<dbReference type="Pfam" id="PF00667">
    <property type="entry name" value="FAD_binding_1"/>
    <property type="match status" value="1"/>
</dbReference>
<dbReference type="Pfam" id="PF00258">
    <property type="entry name" value="Flavodoxin_1"/>
    <property type="match status" value="1"/>
</dbReference>
<dbReference type="Pfam" id="PF00175">
    <property type="entry name" value="NAD_binding_1"/>
    <property type="match status" value="1"/>
</dbReference>
<dbReference type="PRINTS" id="PR00369">
    <property type="entry name" value="FLAVODOXIN"/>
</dbReference>
<dbReference type="PRINTS" id="PR00371">
    <property type="entry name" value="FPNCR"/>
</dbReference>
<dbReference type="SUPFAM" id="SSF52343">
    <property type="entry name" value="Ferredoxin reductase-like, C-terminal NADP-linked domain"/>
    <property type="match status" value="1"/>
</dbReference>
<dbReference type="SUPFAM" id="SSF52218">
    <property type="entry name" value="Flavoproteins"/>
    <property type="match status" value="1"/>
</dbReference>
<dbReference type="SUPFAM" id="SSF63380">
    <property type="entry name" value="Riboflavin synthase domain-like"/>
    <property type="match status" value="1"/>
</dbReference>
<dbReference type="PROSITE" id="PS51384">
    <property type="entry name" value="FAD_FR"/>
    <property type="match status" value="1"/>
</dbReference>
<dbReference type="PROSITE" id="PS50902">
    <property type="entry name" value="FLAVODOXIN_LIKE"/>
    <property type="match status" value="1"/>
</dbReference>
<comment type="function">
    <text evidence="1">Involved in the reductive regeneration of cob(I)alamin cofactor required for the maintenance of methionine synthase in a functional state.</text>
</comment>
<comment type="catalytic activity">
    <reaction evidence="1">
        <text>2 methylcob(III)alamin-[methionine synthase] + 2 S-adenosyl-L-homocysteine + NADP(+) + H(+) = 2 cob(II)alamin-[methionine synthase] + 2 S-adenosyl-L-methionine + NADPH</text>
        <dbReference type="Rhea" id="RHEA:23908"/>
        <dbReference type="Rhea" id="RHEA-COMP:14714"/>
        <dbReference type="Rhea" id="RHEA-COMP:14715"/>
        <dbReference type="ChEBI" id="CHEBI:15378"/>
        <dbReference type="ChEBI" id="CHEBI:16304"/>
        <dbReference type="ChEBI" id="CHEBI:28115"/>
        <dbReference type="ChEBI" id="CHEBI:57783"/>
        <dbReference type="ChEBI" id="CHEBI:57856"/>
        <dbReference type="ChEBI" id="CHEBI:58349"/>
        <dbReference type="ChEBI" id="CHEBI:59789"/>
        <dbReference type="EC" id="1.16.1.8"/>
    </reaction>
</comment>
<comment type="cofactor">
    <cofactor evidence="1">
        <name>FAD</name>
        <dbReference type="ChEBI" id="CHEBI:57692"/>
    </cofactor>
</comment>
<comment type="cofactor">
    <cofactor evidence="1">
        <name>FMN</name>
        <dbReference type="ChEBI" id="CHEBI:58210"/>
    </cofactor>
</comment>
<accession>Q17574</accession>
<accession>Q8I4N2</accession>
<proteinExistence type="inferred from homology"/>
<organism>
    <name type="scientific">Caenorhabditis elegans</name>
    <dbReference type="NCBI Taxonomy" id="6239"/>
    <lineage>
        <taxon>Eukaryota</taxon>
        <taxon>Metazoa</taxon>
        <taxon>Ecdysozoa</taxon>
        <taxon>Nematoda</taxon>
        <taxon>Chromadorea</taxon>
        <taxon>Rhabditida</taxon>
        <taxon>Rhabditina</taxon>
        <taxon>Rhabditomorpha</taxon>
        <taxon>Rhabditoidea</taxon>
        <taxon>Rhabditidae</taxon>
        <taxon>Peloderinae</taxon>
        <taxon>Caenorhabditis</taxon>
    </lineage>
</organism>
<protein>
    <recommendedName>
        <fullName evidence="4">Methionine synthase reductase</fullName>
        <shortName>MSR</shortName>
        <ecNumber evidence="1">1.16.1.8</ecNumber>
    </recommendedName>
</protein>
<sequence length="682" mass="76834">MTDFLIAFGSQTGQAETIAKSLKEKAELIGLTPRLHALDENEKKFNLNEEKLCAIVVSSTGDGDAPDNCARFVRRINRNSLENEYLKNLDYVLLGLGDSNYSSYQTIPRKIDKQLTALGANRLFDRAEADDQVGLELEVEPWIEKFFATLASRFDISADKMNAITESSNLKLNQVKTEEEKKALLQKRIEDEESDDEGRGRVIGIDMLIPEHYDYPEISLLKGSQTLSNDENLRVPIAPQPFIVSSVSNRKLPEDTKLEWQNLCKMPGVVTKPFEVLVVSAEFVTDPFSKKIKTKRMITVDFGDHAAELQYEPGDAIYFCVPNPALEVNFILKRCGVLDIADQQCELSINPKTEKINAQIPGHVHKITTLRHMFTTCLDIRRAPGRPLIRVLAESTSDPNEKRRLLELCSAQGMKDFTDFVRTPGLSLADMLFAFPNVKPPVDRLIELLPRLIPRPYSMSSYENRKARLIYSEMEFPATDGRRHSRKGLATDWLNSLRIGDKVQVLGKEPARFRLPPLGMTKNSAGKLPLLMVGPGTGVSVFLSFLHFLRKLKQDSPSDFVDVPRVLFFGCRDSSVDAIYMSELEMFVSEGILTDLIICESEQKGERVQDGLRKYLDKVLPFLTASTESKIFICGDAKGMSKDVWQCFSDIVASDQGIPDLEAKKKLMDLKKSDQYIEDVWG</sequence>
<gene>
    <name evidence="4" type="primary">mtrr-1</name>
    <name evidence="4" type="synonym">tag-165</name>
    <name evidence="4" type="ORF">C01G6.6</name>
</gene>
<evidence type="ECO:0000250" key="1">
    <source>
        <dbReference type="UniProtKB" id="Q9UBK8"/>
    </source>
</evidence>
<evidence type="ECO:0000255" key="2">
    <source>
        <dbReference type="PROSITE-ProRule" id="PRU00088"/>
    </source>
</evidence>
<evidence type="ECO:0000255" key="3">
    <source>
        <dbReference type="PROSITE-ProRule" id="PRU00716"/>
    </source>
</evidence>
<evidence type="ECO:0000312" key="4">
    <source>
        <dbReference type="WormBase" id="C01G6.6a"/>
    </source>
</evidence>